<name>CYSD_MYCSK</name>
<sequence length="309" mass="34950">MTAAHVAAPEPGQYELSHLRLLEAEAIHIIREVAAEFERPVLLFSGGKDSIVMLHLAIKAFAPARLPFPVMHVDTGHNFDEVISTRDRLVAENGVRLVVASVQEDIDAGRVVDNGPSRNPLQTITLLRAIRENRFDAAFGGARRDEEKARAKERVFSFRDEFGQWDPKAQRPELWNIYNGRHRKGEHIRVFPLSNWTEYDIWAYIGAEGITLPGIYYAHTRPVFQRDGMLLAVHPYMQPRDDEEVFETSVRFRTVGDVTCTGCVESTASTVEDIIAETAVSRLTERGATRADDRISEAGMEDRKREGYF</sequence>
<proteinExistence type="inferred from homology"/>
<gene>
    <name evidence="1" type="primary">cysD</name>
    <name type="ordered locus">Mkms_3993</name>
</gene>
<protein>
    <recommendedName>
        <fullName evidence="1">Sulfate adenylyltransferase subunit 2</fullName>
        <ecNumber evidence="1">2.7.7.4</ecNumber>
    </recommendedName>
    <alternativeName>
        <fullName evidence="1">ATP-sulfurylase small subunit</fullName>
    </alternativeName>
    <alternativeName>
        <fullName evidence="1">Sulfate adenylate transferase</fullName>
        <shortName evidence="1">SAT</shortName>
    </alternativeName>
</protein>
<keyword id="KW-0067">ATP-binding</keyword>
<keyword id="KW-0547">Nucleotide-binding</keyword>
<keyword id="KW-0548">Nucleotidyltransferase</keyword>
<keyword id="KW-0808">Transferase</keyword>
<evidence type="ECO:0000255" key="1">
    <source>
        <dbReference type="HAMAP-Rule" id="MF_00064"/>
    </source>
</evidence>
<comment type="function">
    <text evidence="1">With CysN forms the ATP sulfurylase (ATPS) that catalyzes the adenylation of sulfate producing adenosine 5'-phosphosulfate (APS) and diphosphate, the first enzymatic step in sulfur assimilation pathway. APS synthesis involves the formation of a high-energy phosphoric-sulfuric acid anhydride bond driven by GTP hydrolysis by CysN coupled to ATP hydrolysis by CysD.</text>
</comment>
<comment type="catalytic activity">
    <reaction evidence="1">
        <text>sulfate + ATP + H(+) = adenosine 5'-phosphosulfate + diphosphate</text>
        <dbReference type="Rhea" id="RHEA:18133"/>
        <dbReference type="ChEBI" id="CHEBI:15378"/>
        <dbReference type="ChEBI" id="CHEBI:16189"/>
        <dbReference type="ChEBI" id="CHEBI:30616"/>
        <dbReference type="ChEBI" id="CHEBI:33019"/>
        <dbReference type="ChEBI" id="CHEBI:58243"/>
        <dbReference type="EC" id="2.7.7.4"/>
    </reaction>
</comment>
<comment type="pathway">
    <text evidence="1">Sulfur metabolism; hydrogen sulfide biosynthesis; sulfite from sulfate: step 1/3.</text>
</comment>
<comment type="subunit">
    <text evidence="1">Heterodimer composed of CysD, the smaller subunit, and CysN.</text>
</comment>
<comment type="similarity">
    <text evidence="1">Belongs to the PAPS reductase family. CysD subfamily.</text>
</comment>
<accession>A1UK27</accession>
<organism>
    <name type="scientific">Mycobacterium sp. (strain KMS)</name>
    <dbReference type="NCBI Taxonomy" id="189918"/>
    <lineage>
        <taxon>Bacteria</taxon>
        <taxon>Bacillati</taxon>
        <taxon>Actinomycetota</taxon>
        <taxon>Actinomycetes</taxon>
        <taxon>Mycobacteriales</taxon>
        <taxon>Mycobacteriaceae</taxon>
        <taxon>Mycobacterium</taxon>
    </lineage>
</organism>
<reference key="1">
    <citation type="submission" date="2006-12" db="EMBL/GenBank/DDBJ databases">
        <title>Complete sequence of chromosome of Mycobacterium sp. KMS.</title>
        <authorList>
            <consortium name="US DOE Joint Genome Institute"/>
            <person name="Copeland A."/>
            <person name="Lucas S."/>
            <person name="Lapidus A."/>
            <person name="Barry K."/>
            <person name="Detter J.C."/>
            <person name="Glavina del Rio T."/>
            <person name="Hammon N."/>
            <person name="Israni S."/>
            <person name="Dalin E."/>
            <person name="Tice H."/>
            <person name="Pitluck S."/>
            <person name="Kiss H."/>
            <person name="Brettin T."/>
            <person name="Bruce D."/>
            <person name="Han C."/>
            <person name="Tapia R."/>
            <person name="Gilna P."/>
            <person name="Schmutz J."/>
            <person name="Larimer F."/>
            <person name="Land M."/>
            <person name="Hauser L."/>
            <person name="Kyrpides N."/>
            <person name="Mikhailova N."/>
            <person name="Miller C.D."/>
            <person name="Richardson P."/>
        </authorList>
    </citation>
    <scope>NUCLEOTIDE SEQUENCE [LARGE SCALE GENOMIC DNA]</scope>
    <source>
        <strain>KMS</strain>
    </source>
</reference>
<dbReference type="EC" id="2.7.7.4" evidence="1"/>
<dbReference type="EMBL" id="CP000518">
    <property type="protein sequence ID" value="ABL93185.1"/>
    <property type="molecule type" value="Genomic_DNA"/>
</dbReference>
<dbReference type="SMR" id="A1UK27"/>
<dbReference type="STRING" id="189918.Mkms_3993"/>
<dbReference type="KEGG" id="mkm:Mkms_3993"/>
<dbReference type="HOGENOM" id="CLU_043026_0_0_11"/>
<dbReference type="OrthoDB" id="9772604at2"/>
<dbReference type="UniPathway" id="UPA00140">
    <property type="reaction ID" value="UER00204"/>
</dbReference>
<dbReference type="GO" id="GO:0005524">
    <property type="term" value="F:ATP binding"/>
    <property type="evidence" value="ECO:0007669"/>
    <property type="project" value="UniProtKB-KW"/>
</dbReference>
<dbReference type="GO" id="GO:0004781">
    <property type="term" value="F:sulfate adenylyltransferase (ATP) activity"/>
    <property type="evidence" value="ECO:0007669"/>
    <property type="project" value="UniProtKB-UniRule"/>
</dbReference>
<dbReference type="GO" id="GO:0070814">
    <property type="term" value="P:hydrogen sulfide biosynthetic process"/>
    <property type="evidence" value="ECO:0007669"/>
    <property type="project" value="UniProtKB-UniRule"/>
</dbReference>
<dbReference type="GO" id="GO:0000103">
    <property type="term" value="P:sulfate assimilation"/>
    <property type="evidence" value="ECO:0007669"/>
    <property type="project" value="UniProtKB-UniRule"/>
</dbReference>
<dbReference type="FunFam" id="3.40.50.620:FF:000002">
    <property type="entry name" value="Sulfate adenylyltransferase subunit 2"/>
    <property type="match status" value="1"/>
</dbReference>
<dbReference type="Gene3D" id="3.40.50.620">
    <property type="entry name" value="HUPs"/>
    <property type="match status" value="1"/>
</dbReference>
<dbReference type="HAMAP" id="MF_00064">
    <property type="entry name" value="Sulf_adenylyltr_sub2"/>
    <property type="match status" value="1"/>
</dbReference>
<dbReference type="InterPro" id="IPR002500">
    <property type="entry name" value="PAPS_reduct_dom"/>
</dbReference>
<dbReference type="InterPro" id="IPR014729">
    <property type="entry name" value="Rossmann-like_a/b/a_fold"/>
</dbReference>
<dbReference type="InterPro" id="IPR011784">
    <property type="entry name" value="SO4_adenylTrfase_ssu"/>
</dbReference>
<dbReference type="InterPro" id="IPR050128">
    <property type="entry name" value="Sulfate_adenylyltrnsfr_sub2"/>
</dbReference>
<dbReference type="NCBIfam" id="TIGR02039">
    <property type="entry name" value="CysD"/>
    <property type="match status" value="1"/>
</dbReference>
<dbReference type="NCBIfam" id="NF003587">
    <property type="entry name" value="PRK05253.1"/>
    <property type="match status" value="1"/>
</dbReference>
<dbReference type="NCBIfam" id="NF009214">
    <property type="entry name" value="PRK12563.1"/>
    <property type="match status" value="1"/>
</dbReference>
<dbReference type="PANTHER" id="PTHR43196">
    <property type="entry name" value="SULFATE ADENYLYLTRANSFERASE SUBUNIT 2"/>
    <property type="match status" value="1"/>
</dbReference>
<dbReference type="PANTHER" id="PTHR43196:SF1">
    <property type="entry name" value="SULFATE ADENYLYLTRANSFERASE SUBUNIT 2"/>
    <property type="match status" value="1"/>
</dbReference>
<dbReference type="Pfam" id="PF01507">
    <property type="entry name" value="PAPS_reduct"/>
    <property type="match status" value="1"/>
</dbReference>
<dbReference type="PIRSF" id="PIRSF002936">
    <property type="entry name" value="CysDAde_trans"/>
    <property type="match status" value="1"/>
</dbReference>
<dbReference type="SUPFAM" id="SSF52402">
    <property type="entry name" value="Adenine nucleotide alpha hydrolases-like"/>
    <property type="match status" value="1"/>
</dbReference>
<feature type="chain" id="PRO_1000092210" description="Sulfate adenylyltransferase subunit 2">
    <location>
        <begin position="1"/>
        <end position="309"/>
    </location>
</feature>